<dbReference type="EMBL" id="DQ084064">
    <property type="protein sequence ID" value="AAZ39009.1"/>
    <property type="molecule type" value="mRNA"/>
</dbReference>
<dbReference type="SMR" id="Q3I5F4"/>
<dbReference type="GO" id="GO:0030424">
    <property type="term" value="C:axon"/>
    <property type="evidence" value="ECO:0007669"/>
    <property type="project" value="TreeGrafter"/>
</dbReference>
<dbReference type="GO" id="GO:0030425">
    <property type="term" value="C:dendrite"/>
    <property type="evidence" value="ECO:0007669"/>
    <property type="project" value="TreeGrafter"/>
</dbReference>
<dbReference type="GO" id="GO:0005615">
    <property type="term" value="C:extracellular space"/>
    <property type="evidence" value="ECO:0007669"/>
    <property type="project" value="TreeGrafter"/>
</dbReference>
<dbReference type="GO" id="GO:0008021">
    <property type="term" value="C:synaptic vesicle"/>
    <property type="evidence" value="ECO:0007669"/>
    <property type="project" value="TreeGrafter"/>
</dbReference>
<dbReference type="GO" id="GO:0008083">
    <property type="term" value="F:growth factor activity"/>
    <property type="evidence" value="ECO:0007669"/>
    <property type="project" value="UniProtKB-KW"/>
</dbReference>
<dbReference type="GO" id="GO:0008289">
    <property type="term" value="F:lipid binding"/>
    <property type="evidence" value="ECO:0007669"/>
    <property type="project" value="UniProtKB-KW"/>
</dbReference>
<dbReference type="GO" id="GO:0008191">
    <property type="term" value="F:metalloendopeptidase inhibitor activity"/>
    <property type="evidence" value="ECO:0000250"/>
    <property type="project" value="UniProtKB"/>
</dbReference>
<dbReference type="GO" id="GO:0005163">
    <property type="term" value="F:nerve growth factor receptor binding"/>
    <property type="evidence" value="ECO:0007669"/>
    <property type="project" value="TreeGrafter"/>
</dbReference>
<dbReference type="GO" id="GO:0090729">
    <property type="term" value="F:toxin activity"/>
    <property type="evidence" value="ECO:0007669"/>
    <property type="project" value="UniProtKB-KW"/>
</dbReference>
<dbReference type="GO" id="GO:0007169">
    <property type="term" value="P:cell surface receptor protein tyrosine kinase signaling pathway"/>
    <property type="evidence" value="ECO:0007669"/>
    <property type="project" value="TreeGrafter"/>
</dbReference>
<dbReference type="GO" id="GO:0050804">
    <property type="term" value="P:modulation of chemical synaptic transmission"/>
    <property type="evidence" value="ECO:0007669"/>
    <property type="project" value="TreeGrafter"/>
</dbReference>
<dbReference type="GO" id="GO:0043524">
    <property type="term" value="P:negative regulation of neuron apoptotic process"/>
    <property type="evidence" value="ECO:0007669"/>
    <property type="project" value="TreeGrafter"/>
</dbReference>
<dbReference type="GO" id="GO:0021675">
    <property type="term" value="P:nerve development"/>
    <property type="evidence" value="ECO:0007669"/>
    <property type="project" value="TreeGrafter"/>
</dbReference>
<dbReference type="GO" id="GO:0038180">
    <property type="term" value="P:nerve growth factor signaling pathway"/>
    <property type="evidence" value="ECO:0007669"/>
    <property type="project" value="TreeGrafter"/>
</dbReference>
<dbReference type="GO" id="GO:0048812">
    <property type="term" value="P:neuron projection morphogenesis"/>
    <property type="evidence" value="ECO:0007669"/>
    <property type="project" value="TreeGrafter"/>
</dbReference>
<dbReference type="FunFam" id="2.10.90.10:FF:000002">
    <property type="entry name" value="Brain-derived neurotrophic factor"/>
    <property type="match status" value="1"/>
</dbReference>
<dbReference type="Gene3D" id="2.10.90.10">
    <property type="entry name" value="Cystine-knot cytokines"/>
    <property type="match status" value="1"/>
</dbReference>
<dbReference type="InterPro" id="IPR029034">
    <property type="entry name" value="Cystine-knot_cytokine"/>
</dbReference>
<dbReference type="InterPro" id="IPR020408">
    <property type="entry name" value="Nerve_growth_factor-like"/>
</dbReference>
<dbReference type="InterPro" id="IPR002072">
    <property type="entry name" value="Nerve_growth_factor-rel"/>
</dbReference>
<dbReference type="InterPro" id="IPR020425">
    <property type="entry name" value="Nerve_growth_factor_bsu"/>
</dbReference>
<dbReference type="InterPro" id="IPR019846">
    <property type="entry name" value="Nerve_growth_factor_CS"/>
</dbReference>
<dbReference type="InterPro" id="IPR020433">
    <property type="entry name" value="Venom_nerve_growth_factor"/>
</dbReference>
<dbReference type="PANTHER" id="PTHR11589:SF10">
    <property type="entry name" value="BETA-NERVE GROWTH FACTOR"/>
    <property type="match status" value="1"/>
</dbReference>
<dbReference type="PANTHER" id="PTHR11589">
    <property type="entry name" value="NERVE GROWTH FACTOR NGF -RELATED"/>
    <property type="match status" value="1"/>
</dbReference>
<dbReference type="Pfam" id="PF00243">
    <property type="entry name" value="NGF"/>
    <property type="match status" value="1"/>
</dbReference>
<dbReference type="PIRSF" id="PIRSF001789">
    <property type="entry name" value="NGF"/>
    <property type="match status" value="1"/>
</dbReference>
<dbReference type="PRINTS" id="PR00268">
    <property type="entry name" value="NGF"/>
</dbReference>
<dbReference type="PRINTS" id="PR01913">
    <property type="entry name" value="NGFBETA"/>
</dbReference>
<dbReference type="PRINTS" id="PR01917">
    <property type="entry name" value="VENOMNGF"/>
</dbReference>
<dbReference type="SMART" id="SM00140">
    <property type="entry name" value="NGF"/>
    <property type="match status" value="1"/>
</dbReference>
<dbReference type="SUPFAM" id="SSF57501">
    <property type="entry name" value="Cystine-knot cytokines"/>
    <property type="match status" value="1"/>
</dbReference>
<dbReference type="PROSITE" id="PS00248">
    <property type="entry name" value="NGF_1"/>
    <property type="match status" value="1"/>
</dbReference>
<dbReference type="PROSITE" id="PS50270">
    <property type="entry name" value="NGF_2"/>
    <property type="match status" value="1"/>
</dbReference>
<reference key="1">
    <citation type="journal article" date="2005" name="Cell. Mol. Life Sci.">
        <title>Identification and analysis of venom gland-specific genes from the coastal taipan (Oxyuranus scutellatus) and related species.</title>
        <authorList>
            <person name="St Pierre L."/>
            <person name="Woods R."/>
            <person name="Earl S.T.H."/>
            <person name="Masci P.P."/>
            <person name="Lavin M.F."/>
        </authorList>
    </citation>
    <scope>NUCLEOTIDE SEQUENCE [MRNA]</scope>
    <source>
        <tissue>Venom gland</tissue>
    </source>
</reference>
<reference key="2">
    <citation type="journal article" date="2006" name="Proteomics">
        <title>Post-translational modification accounts for the presence of varied forms of nerve growth factor in Australian elapid snake venoms.</title>
        <authorList>
            <person name="Earl S.T.H."/>
            <person name="Birrell G.W."/>
            <person name="Wallis T.P."/>
            <person name="St Pierre L."/>
            <person name="Masci P.P."/>
            <person name="de Jersey J."/>
            <person name="Gorman J.J."/>
            <person name="Lavin M.F."/>
        </authorList>
    </citation>
    <scope>NUCLEOTIDE SEQUENCE [MRNA]</scope>
    <source>
        <tissue>Venom gland</tissue>
    </source>
</reference>
<reference key="3">
    <citation type="journal article" date="2011" name="Toxicon">
        <title>Molecular diversity of snake venom nerve growth factors.</title>
        <authorList>
            <person name="Trummal K."/>
            <person name="Tonismagi K."/>
            <person name="Paalme V."/>
            <person name="Jarvekulg L."/>
            <person name="Siigur J."/>
            <person name="Siigur E."/>
        </authorList>
    </citation>
    <scope>CHARACTERIZATION</scope>
    <scope>GLYCOSYLATION</scope>
    <source>
        <tissue>Venom</tissue>
    </source>
</reference>
<feature type="signal peptide" evidence="4">
    <location>
        <begin position="1"/>
        <end position="18"/>
    </location>
</feature>
<feature type="propeptide" id="PRO_0000346650" evidence="1">
    <location>
        <begin position="19"/>
        <end position="125"/>
    </location>
</feature>
<feature type="chain" id="PRO_0000346651" description="Venom nerve growth factor">
    <location>
        <begin position="126"/>
        <end position="243"/>
    </location>
</feature>
<feature type="region of interest" description="Disordered" evidence="5">
    <location>
        <begin position="47"/>
        <end position="69"/>
    </location>
</feature>
<feature type="compositionally biased region" description="Basic and acidic residues" evidence="5">
    <location>
        <begin position="47"/>
        <end position="66"/>
    </location>
</feature>
<feature type="glycosylation site" description="N-linked (GlcNAc...) asparagine" evidence="4">
    <location>
        <position position="148"/>
    </location>
</feature>
<feature type="disulfide bond" evidence="2">
    <location>
        <begin position="139"/>
        <end position="204"/>
    </location>
</feature>
<feature type="disulfide bond" evidence="2">
    <location>
        <begin position="182"/>
        <end position="232"/>
    </location>
</feature>
<feature type="disulfide bond" evidence="2">
    <location>
        <begin position="192"/>
        <end position="234"/>
    </location>
</feature>
<organism>
    <name type="scientific">Oxyuranus scutellatus scutellatus</name>
    <name type="common">Australian taipan</name>
    <name type="synonym">Coastal taipan</name>
    <dbReference type="NCBI Taxonomy" id="8667"/>
    <lineage>
        <taxon>Eukaryota</taxon>
        <taxon>Metazoa</taxon>
        <taxon>Chordata</taxon>
        <taxon>Craniata</taxon>
        <taxon>Vertebrata</taxon>
        <taxon>Euteleostomi</taxon>
        <taxon>Lepidosauria</taxon>
        <taxon>Squamata</taxon>
        <taxon>Bifurcata</taxon>
        <taxon>Unidentata</taxon>
        <taxon>Episquamata</taxon>
        <taxon>Toxicofera</taxon>
        <taxon>Serpentes</taxon>
        <taxon>Colubroidea</taxon>
        <taxon>Elapidae</taxon>
        <taxon>Hydrophiinae</taxon>
        <taxon>Oxyuranus</taxon>
    </lineage>
</organism>
<proteinExistence type="evidence at protein level"/>
<sequence>MSMLCYTLIIVFLIGIWAAPKSEDNVPLGSPATSDLSDTSCAQTHEGLKTSRNTDQRHPAPKKAEDQELGSAANIIVDPKLFQKRRFQSPRVLFSTQPPPLSRDEQSVEFLDNEDTLNRNIRAKRETHPVHNLGEYSVCDSISVWVANKTEAMDIKGKPVTVMVDVNLNNHVFKQYFFETKCRNPNPVPSGCRGIDSGHWNSYCTTTQTFVRALTMEGNQASWRFIRIDTACVCVISRKTENF</sequence>
<name>NGFV_OXYSC</name>
<evidence type="ECO:0000250" key="1"/>
<evidence type="ECO:0000250" key="2">
    <source>
        <dbReference type="UniProtKB" id="P61898"/>
    </source>
</evidence>
<evidence type="ECO:0000250" key="3">
    <source>
        <dbReference type="UniProtKB" id="P61899"/>
    </source>
</evidence>
<evidence type="ECO:0000255" key="4"/>
<evidence type="ECO:0000256" key="5">
    <source>
        <dbReference type="SAM" id="MobiDB-lite"/>
    </source>
</evidence>
<evidence type="ECO:0000269" key="6">
    <source>
    </source>
</evidence>
<evidence type="ECO:0000305" key="7"/>
<evidence type="ECO:0000305" key="8">
    <source>
    </source>
</evidence>
<keyword id="KW-0165">Cleavage on pair of basic residues</keyword>
<keyword id="KW-1015">Disulfide bond</keyword>
<keyword id="KW-0325">Glycoprotein</keyword>
<keyword id="KW-0339">Growth factor</keyword>
<keyword id="KW-0446">Lipid-binding</keyword>
<keyword id="KW-0481">Metalloenzyme inhibitor</keyword>
<keyword id="KW-0483">Metalloprotease inhibitor</keyword>
<keyword id="KW-0646">Protease inhibitor</keyword>
<keyword id="KW-0964">Secreted</keyword>
<keyword id="KW-0732">Signal</keyword>
<keyword id="KW-0800">Toxin</keyword>
<accession>Q3I5F4</accession>
<protein>
    <recommendedName>
        <fullName>Venom nerve growth factor</fullName>
        <shortName>v-NGF</shortName>
        <shortName>vNGF</shortName>
    </recommendedName>
</protein>
<comment type="function">
    <text evidence="2 3">Nerve growth factor is important for the development and maintenance of the sympathetic and sensory nervous systems. It stimulates division and differentiation of sympathetic and embryonic sensory neurons as well as basal forebrain cholinergic neurons in the brain. Its relevance in the snake venom is not clear. However, it has been shown to inhibit metalloproteinase-dependent proteolysis of platelet glycoprotein Ib alpha, suggesting a metalloproteinase inhibition to prevent metalloprotease autodigestion and/or protection against prey proteases (By similarity). Binds a lipid between the two protein chains in the homodimer. The lipid-bound form promotes histamine relase from mouse mast cells, contrary to the lipid-free form (By similarity).</text>
</comment>
<comment type="subunit">
    <text evidence="2">Homodimer; non-covalently linked.</text>
</comment>
<comment type="subcellular location">
    <subcellularLocation>
        <location evidence="6">Secreted</location>
    </subcellularLocation>
</comment>
<comment type="tissue specificity">
    <text evidence="8">Expressed by the venom gland.</text>
</comment>
<comment type="similarity">
    <text evidence="7">Belongs to the NGF-beta family.</text>
</comment>